<proteinExistence type="inferred from homology"/>
<reference key="1">
    <citation type="journal article" date="2013" name="Nature">
        <title>The zebrafish reference genome sequence and its relationship to the human genome.</title>
        <authorList>
            <person name="Howe K."/>
            <person name="Clark M.D."/>
            <person name="Torroja C.F."/>
            <person name="Torrance J."/>
            <person name="Berthelot C."/>
            <person name="Muffato M."/>
            <person name="Collins J.E."/>
            <person name="Humphray S."/>
            <person name="McLaren K."/>
            <person name="Matthews L."/>
            <person name="McLaren S."/>
            <person name="Sealy I."/>
            <person name="Caccamo M."/>
            <person name="Churcher C."/>
            <person name="Scott C."/>
            <person name="Barrett J.C."/>
            <person name="Koch R."/>
            <person name="Rauch G.J."/>
            <person name="White S."/>
            <person name="Chow W."/>
            <person name="Kilian B."/>
            <person name="Quintais L.T."/>
            <person name="Guerra-Assuncao J.A."/>
            <person name="Zhou Y."/>
            <person name="Gu Y."/>
            <person name="Yen J."/>
            <person name="Vogel J.H."/>
            <person name="Eyre T."/>
            <person name="Redmond S."/>
            <person name="Banerjee R."/>
            <person name="Chi J."/>
            <person name="Fu B."/>
            <person name="Langley E."/>
            <person name="Maguire S.F."/>
            <person name="Laird G.K."/>
            <person name="Lloyd D."/>
            <person name="Kenyon E."/>
            <person name="Donaldson S."/>
            <person name="Sehra H."/>
            <person name="Almeida-King J."/>
            <person name="Loveland J."/>
            <person name="Trevanion S."/>
            <person name="Jones M."/>
            <person name="Quail M."/>
            <person name="Willey D."/>
            <person name="Hunt A."/>
            <person name="Burton J."/>
            <person name="Sims S."/>
            <person name="McLay K."/>
            <person name="Plumb B."/>
            <person name="Davis J."/>
            <person name="Clee C."/>
            <person name="Oliver K."/>
            <person name="Clark R."/>
            <person name="Riddle C."/>
            <person name="Elliot D."/>
            <person name="Threadgold G."/>
            <person name="Harden G."/>
            <person name="Ware D."/>
            <person name="Begum S."/>
            <person name="Mortimore B."/>
            <person name="Kerry G."/>
            <person name="Heath P."/>
            <person name="Phillimore B."/>
            <person name="Tracey A."/>
            <person name="Corby N."/>
            <person name="Dunn M."/>
            <person name="Johnson C."/>
            <person name="Wood J."/>
            <person name="Clark S."/>
            <person name="Pelan S."/>
            <person name="Griffiths G."/>
            <person name="Smith M."/>
            <person name="Glithero R."/>
            <person name="Howden P."/>
            <person name="Barker N."/>
            <person name="Lloyd C."/>
            <person name="Stevens C."/>
            <person name="Harley J."/>
            <person name="Holt K."/>
            <person name="Panagiotidis G."/>
            <person name="Lovell J."/>
            <person name="Beasley H."/>
            <person name="Henderson C."/>
            <person name="Gordon D."/>
            <person name="Auger K."/>
            <person name="Wright D."/>
            <person name="Collins J."/>
            <person name="Raisen C."/>
            <person name="Dyer L."/>
            <person name="Leung K."/>
            <person name="Robertson L."/>
            <person name="Ambridge K."/>
            <person name="Leongamornlert D."/>
            <person name="McGuire S."/>
            <person name="Gilderthorp R."/>
            <person name="Griffiths C."/>
            <person name="Manthravadi D."/>
            <person name="Nichol S."/>
            <person name="Barker G."/>
            <person name="Whitehead S."/>
            <person name="Kay M."/>
            <person name="Brown J."/>
            <person name="Murnane C."/>
            <person name="Gray E."/>
            <person name="Humphries M."/>
            <person name="Sycamore N."/>
            <person name="Barker D."/>
            <person name="Saunders D."/>
            <person name="Wallis J."/>
            <person name="Babbage A."/>
            <person name="Hammond S."/>
            <person name="Mashreghi-Mohammadi M."/>
            <person name="Barr L."/>
            <person name="Martin S."/>
            <person name="Wray P."/>
            <person name="Ellington A."/>
            <person name="Matthews N."/>
            <person name="Ellwood M."/>
            <person name="Woodmansey R."/>
            <person name="Clark G."/>
            <person name="Cooper J."/>
            <person name="Tromans A."/>
            <person name="Grafham D."/>
            <person name="Skuce C."/>
            <person name="Pandian R."/>
            <person name="Andrews R."/>
            <person name="Harrison E."/>
            <person name="Kimberley A."/>
            <person name="Garnett J."/>
            <person name="Fosker N."/>
            <person name="Hall R."/>
            <person name="Garner P."/>
            <person name="Kelly D."/>
            <person name="Bird C."/>
            <person name="Palmer S."/>
            <person name="Gehring I."/>
            <person name="Berger A."/>
            <person name="Dooley C.M."/>
            <person name="Ersan-Urun Z."/>
            <person name="Eser C."/>
            <person name="Geiger H."/>
            <person name="Geisler M."/>
            <person name="Karotki L."/>
            <person name="Kirn A."/>
            <person name="Konantz J."/>
            <person name="Konantz M."/>
            <person name="Oberlander M."/>
            <person name="Rudolph-Geiger S."/>
            <person name="Teucke M."/>
            <person name="Lanz C."/>
            <person name="Raddatz G."/>
            <person name="Osoegawa K."/>
            <person name="Zhu B."/>
            <person name="Rapp A."/>
            <person name="Widaa S."/>
            <person name="Langford C."/>
            <person name="Yang F."/>
            <person name="Schuster S.C."/>
            <person name="Carter N.P."/>
            <person name="Harrow J."/>
            <person name="Ning Z."/>
            <person name="Herrero J."/>
            <person name="Searle S.M."/>
            <person name="Enright A."/>
            <person name="Geisler R."/>
            <person name="Plasterk R.H."/>
            <person name="Lee C."/>
            <person name="Westerfield M."/>
            <person name="de Jong P.J."/>
            <person name="Zon L.I."/>
            <person name="Postlethwait J.H."/>
            <person name="Nusslein-Volhard C."/>
            <person name="Hubbard T.J."/>
            <person name="Roest Crollius H."/>
            <person name="Rogers J."/>
            <person name="Stemple D.L."/>
        </authorList>
    </citation>
    <scope>NUCLEOTIDE SEQUENCE [LARGE SCALE GENOMIC DNA]</scope>
    <source>
        <strain>Tuebingen</strain>
    </source>
</reference>
<feature type="chain" id="PRO_0000383569" description="Catenin alpha-2">
    <location>
        <begin position="1"/>
        <end position="865"/>
    </location>
</feature>
<feature type="region of interest" description="Disordered" evidence="4">
    <location>
        <begin position="823"/>
        <end position="851"/>
    </location>
</feature>
<feature type="compositionally biased region" description="Basic and acidic residues" evidence="4">
    <location>
        <begin position="823"/>
        <end position="839"/>
    </location>
</feature>
<feature type="compositionally biased region" description="Basic residues" evidence="4">
    <location>
        <begin position="840"/>
        <end position="850"/>
    </location>
</feature>
<organism>
    <name type="scientific">Danio rerio</name>
    <name type="common">Zebrafish</name>
    <name type="synonym">Brachydanio rerio</name>
    <dbReference type="NCBI Taxonomy" id="7955"/>
    <lineage>
        <taxon>Eukaryota</taxon>
        <taxon>Metazoa</taxon>
        <taxon>Chordata</taxon>
        <taxon>Craniata</taxon>
        <taxon>Vertebrata</taxon>
        <taxon>Euteleostomi</taxon>
        <taxon>Actinopterygii</taxon>
        <taxon>Neopterygii</taxon>
        <taxon>Teleostei</taxon>
        <taxon>Ostariophysi</taxon>
        <taxon>Cypriniformes</taxon>
        <taxon>Danionidae</taxon>
        <taxon>Danioninae</taxon>
        <taxon>Danio</taxon>
    </lineage>
</organism>
<comment type="function">
    <text evidence="2">May function as a linker between cadherin adhesion receptors and the cytoskeleton to regulate cell-cell adhesion and differentiation in the nervous system.</text>
</comment>
<comment type="subcellular location">
    <subcellularLocation>
        <location evidence="3">Cell membrane</location>
        <topology evidence="3">Peripheral membrane protein</topology>
        <orientation evidence="3">Cytoplasmic side</orientation>
    </subcellularLocation>
    <subcellularLocation>
        <location evidence="3">Cytoplasm</location>
    </subcellularLocation>
    <subcellularLocation>
        <location evidence="3">Cytoplasm</location>
        <location evidence="3">Cytoskeleton</location>
    </subcellularLocation>
    <subcellularLocation>
        <location evidence="3">Cell junction</location>
        <location evidence="3">Adherens junction</location>
    </subcellularLocation>
    <subcellularLocation>
        <location evidence="3">Cell projection</location>
        <location evidence="3">Axon</location>
    </subcellularLocation>
    <subcellularLocation>
        <location evidence="1">Nucleus</location>
    </subcellularLocation>
</comment>
<comment type="similarity">
    <text evidence="5">Belongs to the vinculin/alpha-catenin family.</text>
</comment>
<gene>
    <name type="primary">Ctnna2</name>
    <name type="ORF">si:dkeyp-13b9.1</name>
</gene>
<evidence type="ECO:0000250" key="1">
    <source>
        <dbReference type="UniProtKB" id="P26232"/>
    </source>
</evidence>
<evidence type="ECO:0000250" key="2">
    <source>
        <dbReference type="UniProtKB" id="P30997"/>
    </source>
</evidence>
<evidence type="ECO:0000250" key="3">
    <source>
        <dbReference type="UniProtKB" id="Q61301"/>
    </source>
</evidence>
<evidence type="ECO:0000256" key="4">
    <source>
        <dbReference type="SAM" id="MobiDB-lite"/>
    </source>
</evidence>
<evidence type="ECO:0000305" key="5"/>
<protein>
    <recommendedName>
        <fullName>Catenin alpha-2</fullName>
    </recommendedName>
    <alternativeName>
        <fullName>Alpha N-catenin</fullName>
    </alternativeName>
</protein>
<sequence length="865" mass="95856">MTSATSPILLKWDPKSLEIRTLTVERLLEPLVTQVTTLVNTSNKGPSSKKKGRSKKAHVLAVSVEQATQNFLEKGEQIAKDSQDLKEELIAAVEDVRKQGDTMRVASSEFADDPCSSVKRGTMVRAARALLSAVTRLLILADMADVMRLLAHLKIELKDPQCRDEMAAARGALKKNATMLYTASQAFLRHPDVAATRANRDYVFKQVQEAIGGISSSAQATSPTDEKHGHAGIGELAAALNEFDNKIILDPLTFSEARFRPSLEERLESIISGAALMADSSCTRDDRRERIVAECNAVRQALQDLLSEYMNNTGRKEKGDPLNSAIDKMTKKTRDLRRQLRKAVMDHISDSFLETNVPLLVLIEAAKSGNEKEVKEYAQVFREHANKLVEVANLACSISNNEEGVKLVRMAATQIDSLCPQVINAALTLAARPQSKVAQDNMDVFKDQWEKQVRILTEAVDDITSVDDFLSVSENHILEDVNKCVIALQEGDVDTLDRTAGAIRGRAARVVHIINAEMENYEPGVYTERVLESIKLLSETVMPRFAEQVEVAIEALSTSPPQPFEENEFIDASRLVYDGVRDIRKAVLMIRTPEELEDDSDFEQEDYDARSRTSIQTEDDQLIAGQSARAIMAQLPQEEKAKIAEQVESFRQEKSKLDAEVAKWDDNGNDIIVLAKQMCMIMMEMTDFTRGKGPLKNSSDVINAAKKIAEAGSRMDKLARAVADQCPDSACKQDLLAYLQRIALYCHQLNICSKVKAEVQNLGGELIVSGLDSATSLIQAAKNLMNAVVLTVKASYVASTKYQKVYGTAAVNSPVVSWRMKAPEKKPLVKREKPEECQTRVRRGSQKKHISPVQALSEFKAMDSF</sequence>
<accession>B7ZC77</accession>
<keyword id="KW-0130">Cell adhesion</keyword>
<keyword id="KW-0965">Cell junction</keyword>
<keyword id="KW-1003">Cell membrane</keyword>
<keyword id="KW-0966">Cell projection</keyword>
<keyword id="KW-0963">Cytoplasm</keyword>
<keyword id="KW-0206">Cytoskeleton</keyword>
<keyword id="KW-0217">Developmental protein</keyword>
<keyword id="KW-0221">Differentiation</keyword>
<keyword id="KW-0472">Membrane</keyword>
<keyword id="KW-0539">Nucleus</keyword>
<keyword id="KW-1185">Reference proteome</keyword>
<dbReference type="EMBL" id="CT997814">
    <property type="protein sequence ID" value="CAX12136.1"/>
    <property type="molecule type" value="Genomic_DNA"/>
</dbReference>
<dbReference type="EMBL" id="AL626804">
    <property type="protein sequence ID" value="CAX12136.1"/>
    <property type="status" value="JOINED"/>
    <property type="molecule type" value="Genomic_DNA"/>
</dbReference>
<dbReference type="EMBL" id="BX927206">
    <property type="protein sequence ID" value="CAX12136.1"/>
    <property type="status" value="JOINED"/>
    <property type="molecule type" value="Genomic_DNA"/>
</dbReference>
<dbReference type="EMBL" id="CR925858">
    <property type="protein sequence ID" value="CAX12136.1"/>
    <property type="status" value="JOINED"/>
    <property type="molecule type" value="Genomic_DNA"/>
</dbReference>
<dbReference type="EMBL" id="CT998561">
    <property type="protein sequence ID" value="CAX12136.1"/>
    <property type="status" value="JOINED"/>
    <property type="molecule type" value="Genomic_DNA"/>
</dbReference>
<dbReference type="EMBL" id="CU076051">
    <property type="protein sequence ID" value="CAX12136.1"/>
    <property type="status" value="JOINED"/>
    <property type="molecule type" value="Genomic_DNA"/>
</dbReference>
<dbReference type="EMBL" id="AL626804">
    <property type="protein sequence ID" value="CAX12850.1"/>
    <property type="molecule type" value="Genomic_DNA"/>
</dbReference>
<dbReference type="EMBL" id="BX927206">
    <property type="protein sequence ID" value="CAX12850.1"/>
    <property type="status" value="JOINED"/>
    <property type="molecule type" value="Genomic_DNA"/>
</dbReference>
<dbReference type="EMBL" id="CR925858">
    <property type="protein sequence ID" value="CAX12850.1"/>
    <property type="status" value="JOINED"/>
    <property type="molecule type" value="Genomic_DNA"/>
</dbReference>
<dbReference type="EMBL" id="CT997814">
    <property type="protein sequence ID" value="CAX12850.1"/>
    <property type="status" value="JOINED"/>
    <property type="molecule type" value="Genomic_DNA"/>
</dbReference>
<dbReference type="EMBL" id="CT998561">
    <property type="protein sequence ID" value="CAX12850.1"/>
    <property type="status" value="JOINED"/>
    <property type="molecule type" value="Genomic_DNA"/>
</dbReference>
<dbReference type="EMBL" id="CU076051">
    <property type="protein sequence ID" value="CAX12850.1"/>
    <property type="status" value="JOINED"/>
    <property type="molecule type" value="Genomic_DNA"/>
</dbReference>
<dbReference type="EMBL" id="CT998561">
    <property type="protein sequence ID" value="CAX13235.1"/>
    <property type="molecule type" value="Genomic_DNA"/>
</dbReference>
<dbReference type="EMBL" id="AL626804">
    <property type="protein sequence ID" value="CAX13235.1"/>
    <property type="status" value="JOINED"/>
    <property type="molecule type" value="Genomic_DNA"/>
</dbReference>
<dbReference type="EMBL" id="BX927206">
    <property type="protein sequence ID" value="CAX13235.1"/>
    <property type="status" value="JOINED"/>
    <property type="molecule type" value="Genomic_DNA"/>
</dbReference>
<dbReference type="EMBL" id="CR925858">
    <property type="protein sequence ID" value="CAX13235.1"/>
    <property type="status" value="JOINED"/>
    <property type="molecule type" value="Genomic_DNA"/>
</dbReference>
<dbReference type="EMBL" id="CT997814">
    <property type="protein sequence ID" value="CAX13235.1"/>
    <property type="status" value="JOINED"/>
    <property type="molecule type" value="Genomic_DNA"/>
</dbReference>
<dbReference type="EMBL" id="CU076051">
    <property type="protein sequence ID" value="CAX13235.1"/>
    <property type="status" value="JOINED"/>
    <property type="molecule type" value="Genomic_DNA"/>
</dbReference>
<dbReference type="EMBL" id="BX927206">
    <property type="protein sequence ID" value="CAX13660.1"/>
    <property type="molecule type" value="Genomic_DNA"/>
</dbReference>
<dbReference type="EMBL" id="AL626804">
    <property type="protein sequence ID" value="CAX13660.1"/>
    <property type="status" value="JOINED"/>
    <property type="molecule type" value="Genomic_DNA"/>
</dbReference>
<dbReference type="EMBL" id="CR925858">
    <property type="protein sequence ID" value="CAX13660.1"/>
    <property type="status" value="JOINED"/>
    <property type="molecule type" value="Genomic_DNA"/>
</dbReference>
<dbReference type="EMBL" id="CT997814">
    <property type="protein sequence ID" value="CAX13660.1"/>
    <property type="status" value="JOINED"/>
    <property type="molecule type" value="Genomic_DNA"/>
</dbReference>
<dbReference type="EMBL" id="CT998561">
    <property type="protein sequence ID" value="CAX13660.1"/>
    <property type="status" value="JOINED"/>
    <property type="molecule type" value="Genomic_DNA"/>
</dbReference>
<dbReference type="EMBL" id="CU076051">
    <property type="protein sequence ID" value="CAX13660.1"/>
    <property type="status" value="JOINED"/>
    <property type="molecule type" value="Genomic_DNA"/>
</dbReference>
<dbReference type="EMBL" id="CR925858">
    <property type="protein sequence ID" value="CAX13953.1"/>
    <property type="molecule type" value="Genomic_DNA"/>
</dbReference>
<dbReference type="EMBL" id="AL626804">
    <property type="protein sequence ID" value="CAX13953.1"/>
    <property type="status" value="JOINED"/>
    <property type="molecule type" value="Genomic_DNA"/>
</dbReference>
<dbReference type="EMBL" id="BX927206">
    <property type="protein sequence ID" value="CAX13953.1"/>
    <property type="status" value="JOINED"/>
    <property type="molecule type" value="Genomic_DNA"/>
</dbReference>
<dbReference type="EMBL" id="CT997814">
    <property type="protein sequence ID" value="CAX13953.1"/>
    <property type="status" value="JOINED"/>
    <property type="molecule type" value="Genomic_DNA"/>
</dbReference>
<dbReference type="EMBL" id="CT998561">
    <property type="protein sequence ID" value="CAX13953.1"/>
    <property type="status" value="JOINED"/>
    <property type="molecule type" value="Genomic_DNA"/>
</dbReference>
<dbReference type="EMBL" id="CU076051">
    <property type="protein sequence ID" value="CAX13953.1"/>
    <property type="status" value="JOINED"/>
    <property type="molecule type" value="Genomic_DNA"/>
</dbReference>
<dbReference type="EMBL" id="CU076051">
    <property type="protein sequence ID" value="CAX14820.1"/>
    <property type="molecule type" value="Genomic_DNA"/>
</dbReference>
<dbReference type="EMBL" id="AL626804">
    <property type="protein sequence ID" value="CAX14820.1"/>
    <property type="status" value="JOINED"/>
    <property type="molecule type" value="Genomic_DNA"/>
</dbReference>
<dbReference type="EMBL" id="BX927206">
    <property type="protein sequence ID" value="CAX14820.1"/>
    <property type="status" value="JOINED"/>
    <property type="molecule type" value="Genomic_DNA"/>
</dbReference>
<dbReference type="EMBL" id="CR925858">
    <property type="protein sequence ID" value="CAX14820.1"/>
    <property type="status" value="JOINED"/>
    <property type="molecule type" value="Genomic_DNA"/>
</dbReference>
<dbReference type="EMBL" id="CT997814">
    <property type="protein sequence ID" value="CAX14820.1"/>
    <property type="status" value="JOINED"/>
    <property type="molecule type" value="Genomic_DNA"/>
</dbReference>
<dbReference type="EMBL" id="CT998561">
    <property type="protein sequence ID" value="CAX14820.1"/>
    <property type="status" value="JOINED"/>
    <property type="molecule type" value="Genomic_DNA"/>
</dbReference>
<dbReference type="RefSeq" id="NP_001152844.1">
    <property type="nucleotide sequence ID" value="NM_001159372.1"/>
</dbReference>
<dbReference type="SMR" id="B7ZC77"/>
<dbReference type="FunCoup" id="B7ZC77">
    <property type="interactions" value="879"/>
</dbReference>
<dbReference type="STRING" id="7955.ENSDARP00000092080"/>
<dbReference type="PaxDb" id="7955-ENSDARP00000092080"/>
<dbReference type="PeptideAtlas" id="B7ZC77"/>
<dbReference type="Ensembl" id="ENSDART00000101306">
    <property type="protein sequence ID" value="ENSDARP00000092080"/>
    <property type="gene ID" value="ENSDARG00000024785"/>
</dbReference>
<dbReference type="GeneID" id="567500"/>
<dbReference type="KEGG" id="dre:567500"/>
<dbReference type="AGR" id="ZFIN:ZDB-GENE-060815-3"/>
<dbReference type="CTD" id="1496"/>
<dbReference type="ZFIN" id="ZDB-GENE-060815-3">
    <property type="gene designation" value="ctnna2"/>
</dbReference>
<dbReference type="eggNOG" id="KOG3681">
    <property type="taxonomic scope" value="Eukaryota"/>
</dbReference>
<dbReference type="HOGENOM" id="CLU_015314_2_0_1"/>
<dbReference type="InParanoid" id="B7ZC77"/>
<dbReference type="OMA" id="MNNMRQF"/>
<dbReference type="OrthoDB" id="6376697at2759"/>
<dbReference type="PhylomeDB" id="B7ZC77"/>
<dbReference type="TreeFam" id="TF313686"/>
<dbReference type="Reactome" id="R-DRE-525793">
    <property type="pathway name" value="Myogenesis"/>
</dbReference>
<dbReference type="PRO" id="PR:B7ZC77"/>
<dbReference type="Proteomes" id="UP000000437">
    <property type="component" value="Chromosome 1"/>
</dbReference>
<dbReference type="Bgee" id="ENSDARG00000024785">
    <property type="expression patterns" value="Expressed in brain and 22 other cell types or tissues"/>
</dbReference>
<dbReference type="ExpressionAtlas" id="B7ZC77">
    <property type="expression patterns" value="baseline and differential"/>
</dbReference>
<dbReference type="GO" id="GO:0005912">
    <property type="term" value="C:adherens junction"/>
    <property type="evidence" value="ECO:0000250"/>
    <property type="project" value="UniProtKB"/>
</dbReference>
<dbReference type="GO" id="GO:0030424">
    <property type="term" value="C:axon"/>
    <property type="evidence" value="ECO:0000250"/>
    <property type="project" value="UniProtKB"/>
</dbReference>
<dbReference type="GO" id="GO:0016342">
    <property type="term" value="C:catenin complex"/>
    <property type="evidence" value="ECO:0000318"/>
    <property type="project" value="GO_Central"/>
</dbReference>
<dbReference type="GO" id="GO:0005737">
    <property type="term" value="C:cytoplasm"/>
    <property type="evidence" value="ECO:0000250"/>
    <property type="project" value="UniProtKB"/>
</dbReference>
<dbReference type="GO" id="GO:0005856">
    <property type="term" value="C:cytoskeleton"/>
    <property type="evidence" value="ECO:0007669"/>
    <property type="project" value="UniProtKB-SubCell"/>
</dbReference>
<dbReference type="GO" id="GO:0005634">
    <property type="term" value="C:nucleus"/>
    <property type="evidence" value="ECO:0007669"/>
    <property type="project" value="UniProtKB-SubCell"/>
</dbReference>
<dbReference type="GO" id="GO:0051015">
    <property type="term" value="F:actin filament binding"/>
    <property type="evidence" value="ECO:0000318"/>
    <property type="project" value="GO_Central"/>
</dbReference>
<dbReference type="GO" id="GO:0008013">
    <property type="term" value="F:beta-catenin binding"/>
    <property type="evidence" value="ECO:0000318"/>
    <property type="project" value="GO_Central"/>
</dbReference>
<dbReference type="GO" id="GO:0045296">
    <property type="term" value="F:cadherin binding"/>
    <property type="evidence" value="ECO:0007669"/>
    <property type="project" value="InterPro"/>
</dbReference>
<dbReference type="GO" id="GO:0007409">
    <property type="term" value="P:axonogenesis"/>
    <property type="evidence" value="ECO:0000250"/>
    <property type="project" value="UniProtKB"/>
</dbReference>
<dbReference type="GO" id="GO:0048854">
    <property type="term" value="P:brain morphogenesis"/>
    <property type="evidence" value="ECO:0000250"/>
    <property type="project" value="UniProtKB"/>
</dbReference>
<dbReference type="GO" id="GO:0016477">
    <property type="term" value="P:cell migration"/>
    <property type="evidence" value="ECO:0000318"/>
    <property type="project" value="GO_Central"/>
</dbReference>
<dbReference type="GO" id="GO:0098609">
    <property type="term" value="P:cell-cell adhesion"/>
    <property type="evidence" value="ECO:0000250"/>
    <property type="project" value="UniProtKB"/>
</dbReference>
<dbReference type="GO" id="GO:0048813">
    <property type="term" value="P:dendrite morphogenesis"/>
    <property type="evidence" value="ECO:0000250"/>
    <property type="project" value="UniProtKB"/>
</dbReference>
<dbReference type="GO" id="GO:0051823">
    <property type="term" value="P:regulation of synapse structural plasticity"/>
    <property type="evidence" value="ECO:0000250"/>
    <property type="project" value="UniProtKB"/>
</dbReference>
<dbReference type="FunFam" id="1.20.120.230:FF:000006">
    <property type="entry name" value="Catenin alpha 1"/>
    <property type="match status" value="1"/>
</dbReference>
<dbReference type="FunFam" id="1.20.120.230:FF:000007">
    <property type="entry name" value="Catenin alpha 1"/>
    <property type="match status" value="1"/>
</dbReference>
<dbReference type="FunFam" id="1.20.120.230:FF:000008">
    <property type="entry name" value="Catenin alpha 1"/>
    <property type="match status" value="1"/>
</dbReference>
<dbReference type="FunFam" id="1.20.120.230:FF:000011">
    <property type="entry name" value="Catenin alpha 1"/>
    <property type="match status" value="1"/>
</dbReference>
<dbReference type="Gene3D" id="6.10.250.2510">
    <property type="match status" value="1"/>
</dbReference>
<dbReference type="Gene3D" id="1.20.120.230">
    <property type="entry name" value="Alpha-catenin/vinculin-like"/>
    <property type="match status" value="5"/>
</dbReference>
<dbReference type="InterPro" id="IPR036723">
    <property type="entry name" value="Alpha-catenin/vinculin-like_sf"/>
</dbReference>
<dbReference type="InterPro" id="IPR001033">
    <property type="entry name" value="Alpha_catenin"/>
</dbReference>
<dbReference type="InterPro" id="IPR006077">
    <property type="entry name" value="Vinculin/catenin"/>
</dbReference>
<dbReference type="PANTHER" id="PTHR18914">
    <property type="entry name" value="ALPHA CATENIN"/>
    <property type="match status" value="1"/>
</dbReference>
<dbReference type="PANTHER" id="PTHR18914:SF23">
    <property type="entry name" value="CATENIN ALPHA-2"/>
    <property type="match status" value="1"/>
</dbReference>
<dbReference type="Pfam" id="PF01044">
    <property type="entry name" value="Vinculin"/>
    <property type="match status" value="2"/>
</dbReference>
<dbReference type="PRINTS" id="PR00805">
    <property type="entry name" value="ALPHACATENIN"/>
</dbReference>
<dbReference type="SUPFAM" id="SSF47220">
    <property type="entry name" value="alpha-catenin/vinculin-like"/>
    <property type="match status" value="4"/>
</dbReference>
<name>CTNA2_DANRE</name>